<proteinExistence type="inferred from homology"/>
<comment type="function">
    <text evidence="1">A type II topoisomerase that negatively supercoils closed circular double-stranded (ds) DNA in an ATP-dependent manner to modulate DNA topology and maintain chromosomes in an underwound state. Negative supercoiling favors strand separation, and DNA replication, transcription, recombination and repair, all of which involve strand separation. Also able to catalyze the interconversion of other topological isomers of dsDNA rings, including catenanes and knotted rings. Type II topoisomerases break and join 2 DNA strands simultaneously in an ATP-dependent manner.</text>
</comment>
<comment type="catalytic activity">
    <reaction evidence="1">
        <text>ATP-dependent breakage, passage and rejoining of double-stranded DNA.</text>
        <dbReference type="EC" id="5.6.2.2"/>
    </reaction>
</comment>
<comment type="subunit">
    <text evidence="1">Heterotetramer, composed of two GyrA and two GyrB chains. In the heterotetramer, GyrA contains the active site tyrosine that forms a transient covalent intermediate with DNA, while GyrB binds cofactors and catalyzes ATP hydrolysis.</text>
</comment>
<comment type="subcellular location">
    <subcellularLocation>
        <location evidence="1">Cytoplasm</location>
    </subcellularLocation>
</comment>
<comment type="miscellaneous">
    <text evidence="1">Few gyrases are as efficient as E.coli at forming negative supercoils. Not all organisms have 2 type II topoisomerases; in organisms with a single type II topoisomerase this enzyme also has to decatenate newly replicated chromosomes.</text>
</comment>
<comment type="similarity">
    <text evidence="1">Belongs to the type II topoisomerase GyrA/ParC subunit family.</text>
</comment>
<evidence type="ECO:0000255" key="1">
    <source>
        <dbReference type="HAMAP-Rule" id="MF_01897"/>
    </source>
</evidence>
<evidence type="ECO:0000255" key="2">
    <source>
        <dbReference type="PROSITE-ProRule" id="PRU01384"/>
    </source>
</evidence>
<sequence>MQDRNLIDVNLTSEMKTSFIDYAMSVIVARALPDVRDGLKPVHRRILYGMNELGVTPDKPHKKSARITGDVMGKYHPHGDSSIYEAMVRMAQWWSYRHMLVDGHGNFGSMDGDGAAAQRYTEARMSKIALELLRDINKNTVNFQDNYDGSEREPVVLPARFPNLLVNGATGIAVGMATNIPPHNLAESIDAVKMVMEHPDCTTRELMEVIPGPDFPTGALVMGRSGIHRAYDTGKGSIVLRSRTEIETTQTGRERIVVTEFPYGVNKTKVHEHIVRLAQEKRLEGITAVRDESSREGVRFVIEIRREASATVILNNLFKLTSLQTNFSFNMLAIENGVPKILSLRQIIDNYISHQKEVIIRRTRFDKDKAEARAHILEGLLIALDHLDEVIAIIRNSETDVIAQTELMSRFDLSERQSQAILDMRLRRLTGLERDKIQSEYDDLLALIADLSDILAKPERIITIIKEEMDEIKRKYANPRRTELMVGEVLSLEDEDLIEEEDVLITLSNKGYIKRLAQDEFRAQKRGGRGVQGTGVNNDDFVRELISTSTHDTLLFFTNFGRVYRLKAYEIPEYGRTAKGLPIVNLLKLEDGETIQTIINARKEETAGKSFFFTTKQGIVKRTEVSEFNNIRQNGLRALKLKEGDQLINVLLTSGQDDIIIGTHSGYSVRFNEASIRNMGRSATGVRGVKLREDDRVVGASRIQDNQEVLVITENGFGKRTSATDYPTKGRGGKGIKTANITPKNGQLAGLVTVDGTEDIMVITNKGVIIRTNVANISQTGRATLGVKIMKLDADAKIVTFTLVQPEDSSIAEINTDRENSISKNKDN</sequence>
<reference key="1">
    <citation type="submission" date="2000-01" db="EMBL/GenBank/DDBJ databases">
        <title>Resistance to multiple fluoroquinolone antibiotics in a clinical isolate of Streptococcus pyogenes: identification of gyrA and parC genes and point mutations responsible for the resistances.</title>
        <authorList>
            <person name="Yan S.S."/>
            <person name="Fedorko D.P."/>
            <person name="Gill V.J."/>
        </authorList>
    </citation>
    <scope>NUCLEOTIDE SEQUENCE [GENOMIC DNA]</scope>
    <source>
        <strain>ATCC 700294 / SF370 / Serotype M1</strain>
    </source>
</reference>
<reference key="2">
    <citation type="journal article" date="2001" name="Proc. Natl. Acad. Sci. U.S.A.">
        <title>Complete genome sequence of an M1 strain of Streptococcus pyogenes.</title>
        <authorList>
            <person name="Ferretti J.J."/>
            <person name="McShan W.M."/>
            <person name="Ajdic D.J."/>
            <person name="Savic D.J."/>
            <person name="Savic G."/>
            <person name="Lyon K."/>
            <person name="Primeaux C."/>
            <person name="Sezate S."/>
            <person name="Suvorov A.N."/>
            <person name="Kenton S."/>
            <person name="Lai H.S."/>
            <person name="Lin S.P."/>
            <person name="Qian Y."/>
            <person name="Jia H.G."/>
            <person name="Najar F.Z."/>
            <person name="Ren Q."/>
            <person name="Zhu H."/>
            <person name="Song L."/>
            <person name="White J."/>
            <person name="Yuan X."/>
            <person name="Clifton S.W."/>
            <person name="Roe B.A."/>
            <person name="McLaughlin R.E."/>
        </authorList>
    </citation>
    <scope>NUCLEOTIDE SEQUENCE [LARGE SCALE GENOMIC DNA]</scope>
    <source>
        <strain>ATCC 700294 / SF370 / Serotype M1</strain>
    </source>
</reference>
<reference key="3">
    <citation type="journal article" date="2005" name="J. Infect. Dis.">
        <title>Evolutionary origin and emergence of a highly successful clone of serotype M1 group A Streptococcus involved multiple horizontal gene transfer events.</title>
        <authorList>
            <person name="Sumby P."/>
            <person name="Porcella S.F."/>
            <person name="Madrigal A.G."/>
            <person name="Barbian K.D."/>
            <person name="Virtaneva K."/>
            <person name="Ricklefs S.M."/>
            <person name="Sturdevant D.E."/>
            <person name="Graham M.R."/>
            <person name="Vuopio-Varkila J."/>
            <person name="Hoe N.P."/>
            <person name="Musser J.M."/>
        </authorList>
    </citation>
    <scope>NUCLEOTIDE SEQUENCE [LARGE SCALE GENOMIC DNA]</scope>
    <source>
        <strain>ATCC BAA-947 / MGAS5005 / Serotype M1</strain>
    </source>
</reference>
<organism>
    <name type="scientific">Streptococcus pyogenes serotype M1</name>
    <dbReference type="NCBI Taxonomy" id="301447"/>
    <lineage>
        <taxon>Bacteria</taxon>
        <taxon>Bacillati</taxon>
        <taxon>Bacillota</taxon>
        <taxon>Bacilli</taxon>
        <taxon>Lactobacillales</taxon>
        <taxon>Streptococcaceae</taxon>
        <taxon>Streptococcus</taxon>
    </lineage>
</organism>
<accession>Q9L7Q5</accession>
<accession>Q48YT0</accession>
<feature type="chain" id="PRO_0000145264" description="DNA gyrase subunit A">
    <location>
        <begin position="1"/>
        <end position="828"/>
    </location>
</feature>
<feature type="domain" description="Topo IIA-type catalytic" evidence="2">
    <location>
        <begin position="32"/>
        <end position="497"/>
    </location>
</feature>
<feature type="short sequence motif" description="GyrA-box" evidence="1">
    <location>
        <begin position="524"/>
        <end position="530"/>
    </location>
</feature>
<feature type="active site" description="O-(5'-phospho-DNA)-tyrosine intermediate" evidence="1">
    <location>
        <position position="120"/>
    </location>
</feature>
<dbReference type="EC" id="5.6.2.2" evidence="1"/>
<dbReference type="EMBL" id="AF220945">
    <property type="protein sequence ID" value="AAF63266.1"/>
    <property type="molecule type" value="Genomic_DNA"/>
</dbReference>
<dbReference type="EMBL" id="AE004092">
    <property type="protein sequence ID" value="AAK34024.1"/>
    <property type="molecule type" value="Genomic_DNA"/>
</dbReference>
<dbReference type="EMBL" id="CP000017">
    <property type="protein sequence ID" value="AAZ51492.1"/>
    <property type="molecule type" value="Genomic_DNA"/>
</dbReference>
<dbReference type="RefSeq" id="NP_269303.1">
    <property type="nucleotide sequence ID" value="NC_002737.2"/>
</dbReference>
<dbReference type="SMR" id="Q9L7Q5"/>
<dbReference type="PaxDb" id="1314-HKU360_00936"/>
<dbReference type="KEGG" id="spy:SPy_1152"/>
<dbReference type="KEGG" id="spz:M5005_Spy0874"/>
<dbReference type="PATRIC" id="fig|160490.10.peg.1005"/>
<dbReference type="HOGENOM" id="CLU_002977_6_1_9"/>
<dbReference type="OMA" id="THHWLLF"/>
<dbReference type="Proteomes" id="UP000000750">
    <property type="component" value="Chromosome"/>
</dbReference>
<dbReference type="GO" id="GO:0005694">
    <property type="term" value="C:chromosome"/>
    <property type="evidence" value="ECO:0007669"/>
    <property type="project" value="InterPro"/>
</dbReference>
<dbReference type="GO" id="GO:0005737">
    <property type="term" value="C:cytoplasm"/>
    <property type="evidence" value="ECO:0007669"/>
    <property type="project" value="UniProtKB-SubCell"/>
</dbReference>
<dbReference type="GO" id="GO:0009330">
    <property type="term" value="C:DNA topoisomerase type II (double strand cut, ATP-hydrolyzing) complex"/>
    <property type="evidence" value="ECO:0007669"/>
    <property type="project" value="TreeGrafter"/>
</dbReference>
<dbReference type="GO" id="GO:0005524">
    <property type="term" value="F:ATP binding"/>
    <property type="evidence" value="ECO:0007669"/>
    <property type="project" value="UniProtKB-UniRule"/>
</dbReference>
<dbReference type="GO" id="GO:0003677">
    <property type="term" value="F:DNA binding"/>
    <property type="evidence" value="ECO:0007669"/>
    <property type="project" value="UniProtKB-UniRule"/>
</dbReference>
<dbReference type="GO" id="GO:0034335">
    <property type="term" value="F:DNA negative supercoiling activity"/>
    <property type="evidence" value="ECO:0007669"/>
    <property type="project" value="UniProtKB-ARBA"/>
</dbReference>
<dbReference type="GO" id="GO:0006265">
    <property type="term" value="P:DNA topological change"/>
    <property type="evidence" value="ECO:0007669"/>
    <property type="project" value="UniProtKB-UniRule"/>
</dbReference>
<dbReference type="GO" id="GO:0006261">
    <property type="term" value="P:DNA-templated DNA replication"/>
    <property type="evidence" value="ECO:0007669"/>
    <property type="project" value="UniProtKB-UniRule"/>
</dbReference>
<dbReference type="CDD" id="cd00187">
    <property type="entry name" value="TOP4c"/>
    <property type="match status" value="1"/>
</dbReference>
<dbReference type="FunFam" id="1.10.268.10:FF:000001">
    <property type="entry name" value="DNA gyrase subunit A"/>
    <property type="match status" value="1"/>
</dbReference>
<dbReference type="FunFam" id="2.120.10.90:FF:000004">
    <property type="entry name" value="DNA gyrase subunit A"/>
    <property type="match status" value="1"/>
</dbReference>
<dbReference type="FunFam" id="3.30.1360.40:FF:000002">
    <property type="entry name" value="DNA gyrase subunit A"/>
    <property type="match status" value="1"/>
</dbReference>
<dbReference type="FunFam" id="3.90.199.10:FF:000001">
    <property type="entry name" value="DNA gyrase subunit A"/>
    <property type="match status" value="1"/>
</dbReference>
<dbReference type="Gene3D" id="3.30.1360.40">
    <property type="match status" value="1"/>
</dbReference>
<dbReference type="Gene3D" id="2.120.10.90">
    <property type="entry name" value="DNA gyrase/topoisomerase IV, subunit A, C-terminal"/>
    <property type="match status" value="1"/>
</dbReference>
<dbReference type="Gene3D" id="3.90.199.10">
    <property type="entry name" value="Topoisomerase II, domain 5"/>
    <property type="match status" value="1"/>
</dbReference>
<dbReference type="Gene3D" id="1.10.268.10">
    <property type="entry name" value="Topoisomerase, domain 3"/>
    <property type="match status" value="1"/>
</dbReference>
<dbReference type="HAMAP" id="MF_01897">
    <property type="entry name" value="GyrA"/>
    <property type="match status" value="1"/>
</dbReference>
<dbReference type="InterPro" id="IPR005743">
    <property type="entry name" value="GyrA"/>
</dbReference>
<dbReference type="InterPro" id="IPR006691">
    <property type="entry name" value="GyrA/parC_rep"/>
</dbReference>
<dbReference type="InterPro" id="IPR035516">
    <property type="entry name" value="Gyrase/topoIV_suA_C"/>
</dbReference>
<dbReference type="InterPro" id="IPR013760">
    <property type="entry name" value="Topo_IIA-like_dom_sf"/>
</dbReference>
<dbReference type="InterPro" id="IPR013758">
    <property type="entry name" value="Topo_IIA_A/C_ab"/>
</dbReference>
<dbReference type="InterPro" id="IPR013757">
    <property type="entry name" value="Topo_IIA_A_a_sf"/>
</dbReference>
<dbReference type="InterPro" id="IPR002205">
    <property type="entry name" value="Topo_IIA_dom_A"/>
</dbReference>
<dbReference type="InterPro" id="IPR050220">
    <property type="entry name" value="Type_II_DNA_Topoisomerases"/>
</dbReference>
<dbReference type="NCBIfam" id="TIGR01063">
    <property type="entry name" value="gyrA"/>
    <property type="match status" value="1"/>
</dbReference>
<dbReference type="NCBIfam" id="NF004043">
    <property type="entry name" value="PRK05560.1"/>
    <property type="match status" value="1"/>
</dbReference>
<dbReference type="NCBIfam" id="NF004044">
    <property type="entry name" value="PRK05561.1"/>
    <property type="match status" value="1"/>
</dbReference>
<dbReference type="PANTHER" id="PTHR43493:SF5">
    <property type="entry name" value="DNA GYRASE SUBUNIT A, CHLOROPLASTIC_MITOCHONDRIAL"/>
    <property type="match status" value="1"/>
</dbReference>
<dbReference type="PANTHER" id="PTHR43493">
    <property type="entry name" value="DNA GYRASE/TOPOISOMERASE SUBUNIT A"/>
    <property type="match status" value="1"/>
</dbReference>
<dbReference type="Pfam" id="PF03989">
    <property type="entry name" value="DNA_gyraseA_C"/>
    <property type="match status" value="6"/>
</dbReference>
<dbReference type="Pfam" id="PF00521">
    <property type="entry name" value="DNA_topoisoIV"/>
    <property type="match status" value="1"/>
</dbReference>
<dbReference type="SMART" id="SM00434">
    <property type="entry name" value="TOP4c"/>
    <property type="match status" value="1"/>
</dbReference>
<dbReference type="SUPFAM" id="SSF101904">
    <property type="entry name" value="GyrA/ParC C-terminal domain-like"/>
    <property type="match status" value="1"/>
</dbReference>
<dbReference type="SUPFAM" id="SSF56719">
    <property type="entry name" value="Type II DNA topoisomerase"/>
    <property type="match status" value="1"/>
</dbReference>
<dbReference type="PROSITE" id="PS52040">
    <property type="entry name" value="TOPO_IIA"/>
    <property type="match status" value="1"/>
</dbReference>
<keyword id="KW-0067">ATP-binding</keyword>
<keyword id="KW-0963">Cytoplasm</keyword>
<keyword id="KW-0238">DNA-binding</keyword>
<keyword id="KW-0413">Isomerase</keyword>
<keyword id="KW-0547">Nucleotide-binding</keyword>
<keyword id="KW-1185">Reference proteome</keyword>
<keyword id="KW-0799">Topoisomerase</keyword>
<gene>
    <name evidence="1" type="primary">gyrA</name>
    <name type="ordered locus">SPy_1152</name>
    <name type="ordered locus">M5005_Spy0874</name>
</gene>
<protein>
    <recommendedName>
        <fullName evidence="1">DNA gyrase subunit A</fullName>
        <ecNumber evidence="1">5.6.2.2</ecNumber>
    </recommendedName>
</protein>
<name>GYRA_STRP1</name>